<comment type="function">
    <text evidence="1">Involved in muscle differentiation (myogenic factor). Induces fibroblasts to differentiate into myoblasts. Probable sequence specific DNA-binding protein (By similarity).</text>
</comment>
<comment type="subunit">
    <text evidence="1">Efficient DNA binding requires dimerization with another bHLH protein.</text>
</comment>
<comment type="subcellular location">
    <subcellularLocation>
        <location evidence="2">Nucleus</location>
    </subcellularLocation>
</comment>
<gene>
    <name type="primary">MYF6</name>
</gene>
<dbReference type="EMBL" id="AY327443">
    <property type="protein sequence ID" value="AAQ16205.1"/>
    <property type="molecule type" value="Genomic_DNA"/>
</dbReference>
<dbReference type="EMBL" id="DQ139775">
    <property type="protein sequence ID" value="AAZ73770.1"/>
    <property type="molecule type" value="Genomic_DNA"/>
</dbReference>
<dbReference type="RefSeq" id="NP_001231601.1">
    <property type="nucleotide sequence ID" value="NM_001244672.1"/>
</dbReference>
<dbReference type="SMR" id="Q3YFL6"/>
<dbReference type="FunCoup" id="Q3YFL6">
    <property type="interactions" value="126"/>
</dbReference>
<dbReference type="STRING" id="9823.ENSSSCP00000073914"/>
<dbReference type="PaxDb" id="9823-ENSSSCP00000001001"/>
<dbReference type="Ensembl" id="ENSSSCT00000001023.5">
    <property type="protein sequence ID" value="ENSSSCP00000001001.2"/>
    <property type="gene ID" value="ENSSSCG00000026533.4"/>
</dbReference>
<dbReference type="Ensembl" id="ENSSSCT00015071271.1">
    <property type="protein sequence ID" value="ENSSSCP00015028570.1"/>
    <property type="gene ID" value="ENSSSCG00015053523.1"/>
</dbReference>
<dbReference type="Ensembl" id="ENSSSCT00025090015.1">
    <property type="protein sequence ID" value="ENSSSCP00025039423.1"/>
    <property type="gene ID" value="ENSSSCG00025065595.1"/>
</dbReference>
<dbReference type="Ensembl" id="ENSSSCT00030020084.1">
    <property type="protein sequence ID" value="ENSSSCP00030008946.1"/>
    <property type="gene ID" value="ENSSSCG00030014581.1"/>
</dbReference>
<dbReference type="Ensembl" id="ENSSSCT00035095460.1">
    <property type="protein sequence ID" value="ENSSSCP00035040150.1"/>
    <property type="gene ID" value="ENSSSCG00035070649.1"/>
</dbReference>
<dbReference type="Ensembl" id="ENSSSCT00040001581.1">
    <property type="protein sequence ID" value="ENSSSCP00040000398.1"/>
    <property type="gene ID" value="ENSSSCG00040001349.1"/>
</dbReference>
<dbReference type="Ensembl" id="ENSSSCT00045027090.1">
    <property type="protein sequence ID" value="ENSSSCP00045018724.1"/>
    <property type="gene ID" value="ENSSSCG00045015931.1"/>
</dbReference>
<dbReference type="Ensembl" id="ENSSSCT00050091461.1">
    <property type="protein sequence ID" value="ENSSSCP00050039371.1"/>
    <property type="gene ID" value="ENSSSCG00050067082.1"/>
</dbReference>
<dbReference type="Ensembl" id="ENSSSCT00055058017.1">
    <property type="protein sequence ID" value="ENSSSCP00055046417.1"/>
    <property type="gene ID" value="ENSSSCG00055029231.1"/>
</dbReference>
<dbReference type="Ensembl" id="ENSSSCT00060003777.1">
    <property type="protein sequence ID" value="ENSSSCP00060001245.1"/>
    <property type="gene ID" value="ENSSSCG00060003062.1"/>
</dbReference>
<dbReference type="Ensembl" id="ENSSSCT00065042254.1">
    <property type="protein sequence ID" value="ENSSSCP00065017907.1"/>
    <property type="gene ID" value="ENSSSCG00065031246.1"/>
</dbReference>
<dbReference type="Ensembl" id="ENSSSCT00070038941.1">
    <property type="protein sequence ID" value="ENSSSCP00070032607.1"/>
    <property type="gene ID" value="ENSSSCG00070019691.1"/>
</dbReference>
<dbReference type="Ensembl" id="ENSSSCT00085047628">
    <property type="protein sequence ID" value="ENSSSCP00085033247"/>
    <property type="gene ID" value="ENSSSCG00085024832"/>
</dbReference>
<dbReference type="Ensembl" id="ENSSSCT00090024045">
    <property type="protein sequence ID" value="ENSSSCP00090014844"/>
    <property type="gene ID" value="ENSSSCG00090013725"/>
</dbReference>
<dbReference type="Ensembl" id="ENSSSCT00105022440">
    <property type="protein sequence ID" value="ENSSSCP00105016250"/>
    <property type="gene ID" value="ENSSSCG00105011273"/>
</dbReference>
<dbReference type="Ensembl" id="ENSSSCT00110000625">
    <property type="protein sequence ID" value="ENSSSCP00110000506"/>
    <property type="gene ID" value="ENSSSCG00110000337"/>
</dbReference>
<dbReference type="Ensembl" id="ENSSSCT00115009247">
    <property type="protein sequence ID" value="ENSSSCP00115008690"/>
    <property type="gene ID" value="ENSSSCG00115005366"/>
</dbReference>
<dbReference type="Ensembl" id="ENSSSCT00130039876">
    <property type="protein sequence ID" value="ENSSSCP00130028219"/>
    <property type="gene ID" value="ENSSSCG00130020506"/>
</dbReference>
<dbReference type="GeneID" id="397005"/>
<dbReference type="KEGG" id="ssc:397005"/>
<dbReference type="CTD" id="4618"/>
<dbReference type="VGNC" id="VGNC:103304">
    <property type="gene designation" value="MYF6"/>
</dbReference>
<dbReference type="eggNOG" id="KOG3960">
    <property type="taxonomic scope" value="Eukaryota"/>
</dbReference>
<dbReference type="GeneTree" id="ENSGT00950000182959"/>
<dbReference type="HOGENOM" id="CLU_100258_0_0_1"/>
<dbReference type="InParanoid" id="Q3YFL6"/>
<dbReference type="OMA" id="SPCQDQI"/>
<dbReference type="OrthoDB" id="10049614at2759"/>
<dbReference type="TreeFam" id="TF316344"/>
<dbReference type="Reactome" id="R-SSC-525793">
    <property type="pathway name" value="Myogenesis"/>
</dbReference>
<dbReference type="Proteomes" id="UP000008227">
    <property type="component" value="Chromosome 5"/>
</dbReference>
<dbReference type="Proteomes" id="UP000314985">
    <property type="component" value="Chromosome 5"/>
</dbReference>
<dbReference type="Proteomes" id="UP000694570">
    <property type="component" value="Unplaced"/>
</dbReference>
<dbReference type="Proteomes" id="UP000694571">
    <property type="component" value="Unplaced"/>
</dbReference>
<dbReference type="Proteomes" id="UP000694720">
    <property type="component" value="Unplaced"/>
</dbReference>
<dbReference type="Proteomes" id="UP000694722">
    <property type="component" value="Unplaced"/>
</dbReference>
<dbReference type="Proteomes" id="UP000694723">
    <property type="component" value="Unplaced"/>
</dbReference>
<dbReference type="Proteomes" id="UP000694724">
    <property type="component" value="Unplaced"/>
</dbReference>
<dbReference type="Proteomes" id="UP000694725">
    <property type="component" value="Unplaced"/>
</dbReference>
<dbReference type="Proteomes" id="UP000694726">
    <property type="component" value="Unplaced"/>
</dbReference>
<dbReference type="Proteomes" id="UP000694727">
    <property type="component" value="Unplaced"/>
</dbReference>
<dbReference type="Proteomes" id="UP000694728">
    <property type="component" value="Unplaced"/>
</dbReference>
<dbReference type="Bgee" id="ENSSSCG00000026533">
    <property type="expression patterns" value="Expressed in longissimus lumborum muscle and 9 other cell types or tissues"/>
</dbReference>
<dbReference type="ExpressionAtlas" id="Q3YFL6">
    <property type="expression patterns" value="baseline and differential"/>
</dbReference>
<dbReference type="GO" id="GO:0005829">
    <property type="term" value="C:cytosol"/>
    <property type="evidence" value="ECO:0007669"/>
    <property type="project" value="Ensembl"/>
</dbReference>
<dbReference type="GO" id="GO:0072686">
    <property type="term" value="C:mitotic spindle"/>
    <property type="evidence" value="ECO:0007669"/>
    <property type="project" value="Ensembl"/>
</dbReference>
<dbReference type="GO" id="GO:0005654">
    <property type="term" value="C:nucleoplasm"/>
    <property type="evidence" value="ECO:0007669"/>
    <property type="project" value="Ensembl"/>
</dbReference>
<dbReference type="GO" id="GO:0001228">
    <property type="term" value="F:DNA-binding transcription activator activity, RNA polymerase II-specific"/>
    <property type="evidence" value="ECO:0007669"/>
    <property type="project" value="Ensembl"/>
</dbReference>
<dbReference type="GO" id="GO:0000981">
    <property type="term" value="F:DNA-binding transcription factor activity, RNA polymerase II-specific"/>
    <property type="evidence" value="ECO:0000318"/>
    <property type="project" value="GO_Central"/>
</dbReference>
<dbReference type="GO" id="GO:0046983">
    <property type="term" value="F:protein dimerization activity"/>
    <property type="evidence" value="ECO:0007669"/>
    <property type="project" value="InterPro"/>
</dbReference>
<dbReference type="GO" id="GO:0000978">
    <property type="term" value="F:RNA polymerase II cis-regulatory region sequence-specific DNA binding"/>
    <property type="evidence" value="ECO:0000318"/>
    <property type="project" value="GO_Central"/>
</dbReference>
<dbReference type="GO" id="GO:0060415">
    <property type="term" value="P:muscle tissue morphogenesis"/>
    <property type="evidence" value="ECO:0007669"/>
    <property type="project" value="Ensembl"/>
</dbReference>
<dbReference type="GO" id="GO:0045892">
    <property type="term" value="P:negative regulation of DNA-templated transcription"/>
    <property type="evidence" value="ECO:0007669"/>
    <property type="project" value="Ensembl"/>
</dbReference>
<dbReference type="GO" id="GO:0045663">
    <property type="term" value="P:positive regulation of myoblast differentiation"/>
    <property type="evidence" value="ECO:0000318"/>
    <property type="project" value="GO_Central"/>
</dbReference>
<dbReference type="GO" id="GO:0048743">
    <property type="term" value="P:positive regulation of skeletal muscle fiber development"/>
    <property type="evidence" value="ECO:0000318"/>
    <property type="project" value="GO_Central"/>
</dbReference>
<dbReference type="GO" id="GO:0006357">
    <property type="term" value="P:regulation of transcription by RNA polymerase II"/>
    <property type="evidence" value="ECO:0000318"/>
    <property type="project" value="GO_Central"/>
</dbReference>
<dbReference type="GO" id="GO:0035914">
    <property type="term" value="P:skeletal muscle cell differentiation"/>
    <property type="evidence" value="ECO:0000318"/>
    <property type="project" value="GO_Central"/>
</dbReference>
<dbReference type="GO" id="GO:0001756">
    <property type="term" value="P:somitogenesis"/>
    <property type="evidence" value="ECO:0007669"/>
    <property type="project" value="Ensembl"/>
</dbReference>
<dbReference type="CDD" id="cd18934">
    <property type="entry name" value="bHLH_TS_MRF4_Myf6"/>
    <property type="match status" value="1"/>
</dbReference>
<dbReference type="FunFam" id="4.10.280.10:FF:000005">
    <property type="entry name" value="Myogenic factor"/>
    <property type="match status" value="1"/>
</dbReference>
<dbReference type="Gene3D" id="4.10.280.10">
    <property type="entry name" value="Helix-loop-helix DNA-binding domain"/>
    <property type="match status" value="1"/>
</dbReference>
<dbReference type="InterPro" id="IPR011598">
    <property type="entry name" value="bHLH_dom"/>
</dbReference>
<dbReference type="InterPro" id="IPR036638">
    <property type="entry name" value="HLH_DNA-bd_sf"/>
</dbReference>
<dbReference type="InterPro" id="IPR002546">
    <property type="entry name" value="MyoD_N"/>
</dbReference>
<dbReference type="InterPro" id="IPR039704">
    <property type="entry name" value="Myogenic_factor"/>
</dbReference>
<dbReference type="PANTHER" id="PTHR11534">
    <property type="entry name" value="MYOGENIC FACTOR"/>
    <property type="match status" value="1"/>
</dbReference>
<dbReference type="PANTHER" id="PTHR11534:SF4">
    <property type="entry name" value="MYOGENIC FACTOR 6"/>
    <property type="match status" value="1"/>
</dbReference>
<dbReference type="Pfam" id="PF01586">
    <property type="entry name" value="Basic"/>
    <property type="match status" value="1"/>
</dbReference>
<dbReference type="Pfam" id="PF00010">
    <property type="entry name" value="HLH"/>
    <property type="match status" value="1"/>
</dbReference>
<dbReference type="SMART" id="SM00520">
    <property type="entry name" value="BASIC"/>
    <property type="match status" value="1"/>
</dbReference>
<dbReference type="SMART" id="SM00353">
    <property type="entry name" value="HLH"/>
    <property type="match status" value="1"/>
</dbReference>
<dbReference type="SUPFAM" id="SSF47459">
    <property type="entry name" value="HLH, helix-loop-helix DNA-binding domain"/>
    <property type="match status" value="1"/>
</dbReference>
<dbReference type="PROSITE" id="PS50888">
    <property type="entry name" value="BHLH"/>
    <property type="match status" value="1"/>
</dbReference>
<organism>
    <name type="scientific">Sus scrofa</name>
    <name type="common">Pig</name>
    <dbReference type="NCBI Taxonomy" id="9823"/>
    <lineage>
        <taxon>Eukaryota</taxon>
        <taxon>Metazoa</taxon>
        <taxon>Chordata</taxon>
        <taxon>Craniata</taxon>
        <taxon>Vertebrata</taxon>
        <taxon>Euteleostomi</taxon>
        <taxon>Mammalia</taxon>
        <taxon>Eutheria</taxon>
        <taxon>Laurasiatheria</taxon>
        <taxon>Artiodactyla</taxon>
        <taxon>Suina</taxon>
        <taxon>Suidae</taxon>
        <taxon>Sus</taxon>
    </lineage>
</organism>
<feature type="chain" id="PRO_0000127353" description="Myogenic factor 6">
    <location>
        <begin position="1"/>
        <end position="242"/>
    </location>
</feature>
<feature type="domain" description="bHLH" evidence="2">
    <location>
        <begin position="93"/>
        <end position="144"/>
    </location>
</feature>
<feature type="region of interest" description="Disordered" evidence="3">
    <location>
        <begin position="31"/>
        <end position="63"/>
    </location>
</feature>
<feature type="sequence conflict" description="In Ref. 1; AAQ16205." evidence="4" ref="1">
    <original>G</original>
    <variation>V</variation>
    <location>
        <position position="240"/>
    </location>
</feature>
<protein>
    <recommendedName>
        <fullName>Myogenic factor 6</fullName>
        <shortName>Myf-6</shortName>
    </recommendedName>
</protein>
<name>MYF6_PIG</name>
<reference key="1">
    <citation type="journal article" date="2004" name="Anim. Biotechnol.">
        <title>Porcine MYF6 gene: sequence, homology analysis, and variation in the promoter region.</title>
        <authorList>
            <person name="Wyszynska-Koko J."/>
            <person name="Kuryl J."/>
        </authorList>
    </citation>
    <scope>NUCLEOTIDE SEQUENCE [GENOMIC DNA]</scope>
    <source>
        <strain>L990</strain>
    </source>
</reference>
<reference key="2">
    <citation type="submission" date="2005-07" db="EMBL/GenBank/DDBJ databases">
        <title>Associations of polymorphisms in the genes of MYF5, MYOD1 and MYF6 with meat quality and carcass traits in pig.</title>
        <authorList>
            <person name="Liu M."/>
            <person name="Jiang S.W."/>
        </authorList>
    </citation>
    <scope>NUCLEOTIDE SEQUENCE [GENOMIC DNA]</scope>
</reference>
<sequence>MMMDLFETGSYFFYLDGENVTLQPLEVAEGSPLYPGSDGTLSPCQDQMPPEAGSDSSGEEHVLAPPGLQPPHCPGQCLIWACKTCKRKSAPTDRRKAATLRERRRLKKINEAFEALKRRTVANPNQRLPKVEILRSAINYIERLQDLLHRLDQQDKMQELGVDPFSYRPKQENLEGADFLRTCSSQWPSVSDHSRGLVMTAKEGGTNIDSSASSSLRCLSSIVDSISSEEHTLPCVEEVGEK</sequence>
<proteinExistence type="inferred from homology"/>
<accession>Q3YFL6</accession>
<accession>Q7YRC4</accession>
<evidence type="ECO:0000250" key="1"/>
<evidence type="ECO:0000255" key="2">
    <source>
        <dbReference type="PROSITE-ProRule" id="PRU00981"/>
    </source>
</evidence>
<evidence type="ECO:0000256" key="3">
    <source>
        <dbReference type="SAM" id="MobiDB-lite"/>
    </source>
</evidence>
<evidence type="ECO:0000305" key="4"/>
<keyword id="KW-0217">Developmental protein</keyword>
<keyword id="KW-0221">Differentiation</keyword>
<keyword id="KW-0238">DNA-binding</keyword>
<keyword id="KW-0517">Myogenesis</keyword>
<keyword id="KW-0539">Nucleus</keyword>
<keyword id="KW-1185">Reference proteome</keyword>